<name>UTER_HORSE</name>
<organism>
    <name type="scientific">Equus caballus</name>
    <name type="common">Horse</name>
    <dbReference type="NCBI Taxonomy" id="9796"/>
    <lineage>
        <taxon>Eukaryota</taxon>
        <taxon>Metazoa</taxon>
        <taxon>Chordata</taxon>
        <taxon>Craniata</taxon>
        <taxon>Vertebrata</taxon>
        <taxon>Euteleostomi</taxon>
        <taxon>Mammalia</taxon>
        <taxon>Eutheria</taxon>
        <taxon>Laurasiatheria</taxon>
        <taxon>Perissodactyla</taxon>
        <taxon>Equidae</taxon>
        <taxon>Equus</taxon>
    </lineage>
</organism>
<dbReference type="EMBL" id="AF372660">
    <property type="protein sequence ID" value="AAM21316.1"/>
    <property type="molecule type" value="mRNA"/>
</dbReference>
<dbReference type="EMBL" id="AY885564">
    <property type="protein sequence ID" value="AAW83220.1"/>
    <property type="molecule type" value="mRNA"/>
</dbReference>
<dbReference type="RefSeq" id="NP_001075327.2">
    <property type="nucleotide sequence ID" value="NM_001081858.2"/>
</dbReference>
<dbReference type="SMR" id="Q8MKG2"/>
<dbReference type="FunCoup" id="Q8MKG2">
    <property type="interactions" value="6"/>
</dbReference>
<dbReference type="STRING" id="9796.ENSECAP00000008559"/>
<dbReference type="PaxDb" id="9796-ENSECAP00000011652"/>
<dbReference type="GeneID" id="100033916"/>
<dbReference type="KEGG" id="ecb:100033916"/>
<dbReference type="InParanoid" id="Q8MKG2"/>
<dbReference type="OrthoDB" id="9585556at2759"/>
<dbReference type="Proteomes" id="UP000002281">
    <property type="component" value="Unplaced"/>
</dbReference>
<dbReference type="GO" id="GO:0005737">
    <property type="term" value="C:cytoplasm"/>
    <property type="evidence" value="ECO:0000318"/>
    <property type="project" value="GO_Central"/>
</dbReference>
<dbReference type="GO" id="GO:0005615">
    <property type="term" value="C:extracellular space"/>
    <property type="evidence" value="ECO:0000318"/>
    <property type="project" value="GO_Central"/>
</dbReference>
<dbReference type="GO" id="GO:0019834">
    <property type="term" value="F:phospholipase A2 inhibitor activity"/>
    <property type="evidence" value="ECO:0007669"/>
    <property type="project" value="UniProtKB-KW"/>
</dbReference>
<dbReference type="GO" id="GO:0007165">
    <property type="term" value="P:signal transduction"/>
    <property type="evidence" value="ECO:0007669"/>
    <property type="project" value="InterPro"/>
</dbReference>
<dbReference type="CDD" id="cd00633">
    <property type="entry name" value="Secretoglobin"/>
    <property type="match status" value="1"/>
</dbReference>
<dbReference type="FunFam" id="1.10.210.10:FF:000001">
    <property type="entry name" value="Uteroglobin"/>
    <property type="match status" value="1"/>
</dbReference>
<dbReference type="Gene3D" id="1.10.210.10">
    <property type="entry name" value="Secretoglobin"/>
    <property type="match status" value="1"/>
</dbReference>
<dbReference type="InterPro" id="IPR016126">
    <property type="entry name" value="Secretoglobin"/>
</dbReference>
<dbReference type="InterPro" id="IPR043215">
    <property type="entry name" value="Secretoglobin_1C-like"/>
</dbReference>
<dbReference type="InterPro" id="IPR035960">
    <property type="entry name" value="Secretoglobin_sf"/>
</dbReference>
<dbReference type="InterPro" id="IPR000329">
    <property type="entry name" value="Uteroglobin"/>
</dbReference>
<dbReference type="PANTHER" id="PTHR10136">
    <property type="entry name" value="SECRETOGLOBIN FAMILY 1 MEMBER"/>
    <property type="match status" value="1"/>
</dbReference>
<dbReference type="PANTHER" id="PTHR10136:SF6">
    <property type="entry name" value="UTEROGLOBIN"/>
    <property type="match status" value="1"/>
</dbReference>
<dbReference type="Pfam" id="PF01099">
    <property type="entry name" value="Uteroglobin"/>
    <property type="match status" value="1"/>
</dbReference>
<dbReference type="PRINTS" id="PR00486">
    <property type="entry name" value="UTEROGLOBIN"/>
</dbReference>
<dbReference type="SMART" id="SM00096">
    <property type="entry name" value="UTG"/>
    <property type="match status" value="1"/>
</dbReference>
<dbReference type="SUPFAM" id="SSF48201">
    <property type="entry name" value="Uteroglobin-like"/>
    <property type="match status" value="1"/>
</dbReference>
<dbReference type="PROSITE" id="PS51311">
    <property type="entry name" value="SCGB"/>
    <property type="match status" value="1"/>
</dbReference>
<proteinExistence type="evidence at transcript level"/>
<keyword id="KW-1015">Disulfide bond</keyword>
<keyword id="KW-0593">Phospholipase A2 inhibitor</keyword>
<keyword id="KW-1185">Reference proteome</keyword>
<keyword id="KW-0964">Secreted</keyword>
<keyword id="KW-0732">Signal</keyword>
<comment type="function">
    <text evidence="1">Binds phosphatidylcholine, phosphatidylinositol, polychlorinated biphenyls (PCB) and weakly progesterone, potent inhibitor of phospholipase A2.</text>
</comment>
<comment type="subunit">
    <text evidence="2">Antiparallel homodimer; disulfide-linked (By similarity). Interaction with LMBR1L is controversial (By similarity).</text>
</comment>
<comment type="subcellular location">
    <subcellularLocation>
        <location>Secreted</location>
    </subcellularLocation>
</comment>
<comment type="tissue specificity">
    <text evidence="3">Club cells (nonciliated cells of the surface epithelium of the pulmonary airways). Expressed in lung, uterus, and prostate.</text>
</comment>
<comment type="similarity">
    <text evidence="4">Belongs to the secretoglobin family.</text>
</comment>
<accession>Q8MKG2</accession>
<accession>Q5EG10</accession>
<gene>
    <name type="primary">SCGB1A1</name>
    <name type="synonym">UGB</name>
</gene>
<protein>
    <recommendedName>
        <fullName>Uteroglobin</fullName>
    </recommendedName>
    <alternativeName>
        <fullName>Secretoglobin family 1A member 1</fullName>
    </alternativeName>
</protein>
<evidence type="ECO:0000250" key="1"/>
<evidence type="ECO:0000250" key="2">
    <source>
        <dbReference type="UniProtKB" id="P11684"/>
    </source>
</evidence>
<evidence type="ECO:0000269" key="3">
    <source>
    </source>
</evidence>
<evidence type="ECO:0000305" key="4"/>
<feature type="signal peptide" evidence="1">
    <location>
        <begin position="1"/>
        <end position="21"/>
    </location>
</feature>
<feature type="chain" id="PRO_0000036364" description="Uteroglobin">
    <location>
        <begin position="22"/>
        <end position="91"/>
    </location>
</feature>
<feature type="disulfide bond" description="Interchain (with C-90)" evidence="1">
    <location>
        <position position="24"/>
    </location>
</feature>
<feature type="disulfide bond" description="Interchain (with C-24)" evidence="1">
    <location>
        <position position="90"/>
    </location>
</feature>
<feature type="sequence conflict" description="In Ref. 1; AAM21316." evidence="4" ref="1">
    <original>E</original>
    <variation>G</variation>
    <location>
        <position position="22"/>
    </location>
</feature>
<feature type="sequence conflict" description="In Ref. 1; AAM21316." evidence="4" ref="1">
    <original>S</original>
    <variation>R</variation>
    <location>
        <position position="26"/>
    </location>
</feature>
<feature type="sequence conflict" description="In Ref. 1; AAM21316." evidence="4" ref="1">
    <original>D</original>
    <variation>G</variation>
    <location>
        <position position="29"/>
    </location>
</feature>
<feature type="sequence conflict" description="In Ref. 1; AAM21316." evidence="4" ref="1">
    <original>T</original>
    <variation>A</variation>
    <location>
        <position position="59"/>
    </location>
</feature>
<sequence length="91" mass="9674">MKLAITITLAILALCCSPASAEICQSFADIIQGLFLGTPASFEAAVEPFKPDADMKAATTQLKTLVDFLPKNTKDSILKLMDKIAKSPLCA</sequence>
<reference key="1">
    <citation type="journal article" date="2002" name="Biol. Reprod.">
        <title>Full-length complementary DNA and the derived amino acid sequence of horse uteroglobin.</title>
        <authorList>
            <person name="Muller-Schottle F."/>
            <person name="Bogusz A."/>
            <person name="Grotzinger J."/>
            <person name="Herrler A."/>
            <person name="Krusche C.A."/>
            <person name="Beier-Hellwig K."/>
            <person name="Beier H.M."/>
        </authorList>
    </citation>
    <scope>NUCLEOTIDE SEQUENCE [MRNA]</scope>
    <scope>TISSUE SPECIFICITY</scope>
</reference>
<reference key="2">
    <citation type="submission" date="2005-01" db="EMBL/GenBank/DDBJ databases">
        <title>Equine Secretoglobin (SCGB1A1) (CCSP).</title>
        <authorList>
            <person name="Katavolos P."/>
            <person name="Bayley T."/>
            <person name="Clark M."/>
            <person name="Bienzle D."/>
        </authorList>
    </citation>
    <scope>NUCLEOTIDE SEQUENCE [MRNA]</scope>
    <source>
        <tissue>Lung</tissue>
    </source>
</reference>